<reference key="1">
    <citation type="journal article" date="1992" name="J. Biol. Chem.">
        <title>Molecular cloning, sequencing, and physiological characterization of the qox operon from Bacillus subtilis encoding the aa3-600 quinol oxidase.</title>
        <authorList>
            <person name="Santana M."/>
            <person name="Kunst F."/>
            <person name="Hullo M.-F."/>
            <person name="Rapoport G."/>
            <person name="Danchin A."/>
            <person name="Glaser P."/>
        </authorList>
    </citation>
    <scope>NUCLEOTIDE SEQUENCE [GENOMIC DNA]</scope>
    <source>
        <strain>168</strain>
    </source>
</reference>
<reference key="2">
    <citation type="journal article" date="1993" name="Mol. Microbiol.">
        <title>Bacillus subtilis genome project: cloning and sequencing of the 97 kb region from 325 degrees to 333 degrees.</title>
        <authorList>
            <person name="Glaser P."/>
            <person name="Kunst F."/>
            <person name="Arnaud M."/>
            <person name="Coudart M.P."/>
            <person name="Gonzales W."/>
            <person name="Hullo M.-F."/>
            <person name="Ionescu M."/>
            <person name="Lubochinsky B."/>
            <person name="Marcelino L."/>
            <person name="Moszer I."/>
            <person name="Presecan E."/>
            <person name="Santana M."/>
            <person name="Schneider E."/>
            <person name="Schweizer J."/>
            <person name="Vertes A."/>
            <person name="Rapoport G."/>
            <person name="Danchin A."/>
        </authorList>
    </citation>
    <scope>NUCLEOTIDE SEQUENCE [GENOMIC DNA]</scope>
    <source>
        <strain>168</strain>
    </source>
</reference>
<reference key="3">
    <citation type="journal article" date="1997" name="Nature">
        <title>The complete genome sequence of the Gram-positive bacterium Bacillus subtilis.</title>
        <authorList>
            <person name="Kunst F."/>
            <person name="Ogasawara N."/>
            <person name="Moszer I."/>
            <person name="Albertini A.M."/>
            <person name="Alloni G."/>
            <person name="Azevedo V."/>
            <person name="Bertero M.G."/>
            <person name="Bessieres P."/>
            <person name="Bolotin A."/>
            <person name="Borchert S."/>
            <person name="Borriss R."/>
            <person name="Boursier L."/>
            <person name="Brans A."/>
            <person name="Braun M."/>
            <person name="Brignell S.C."/>
            <person name="Bron S."/>
            <person name="Brouillet S."/>
            <person name="Bruschi C.V."/>
            <person name="Caldwell B."/>
            <person name="Capuano V."/>
            <person name="Carter N.M."/>
            <person name="Choi S.-K."/>
            <person name="Codani J.-J."/>
            <person name="Connerton I.F."/>
            <person name="Cummings N.J."/>
            <person name="Daniel R.A."/>
            <person name="Denizot F."/>
            <person name="Devine K.M."/>
            <person name="Duesterhoeft A."/>
            <person name="Ehrlich S.D."/>
            <person name="Emmerson P.T."/>
            <person name="Entian K.-D."/>
            <person name="Errington J."/>
            <person name="Fabret C."/>
            <person name="Ferrari E."/>
            <person name="Foulger D."/>
            <person name="Fritz C."/>
            <person name="Fujita M."/>
            <person name="Fujita Y."/>
            <person name="Fuma S."/>
            <person name="Galizzi A."/>
            <person name="Galleron N."/>
            <person name="Ghim S.-Y."/>
            <person name="Glaser P."/>
            <person name="Goffeau A."/>
            <person name="Golightly E.J."/>
            <person name="Grandi G."/>
            <person name="Guiseppi G."/>
            <person name="Guy B.J."/>
            <person name="Haga K."/>
            <person name="Haiech J."/>
            <person name="Harwood C.R."/>
            <person name="Henaut A."/>
            <person name="Hilbert H."/>
            <person name="Holsappel S."/>
            <person name="Hosono S."/>
            <person name="Hullo M.-F."/>
            <person name="Itaya M."/>
            <person name="Jones L.-M."/>
            <person name="Joris B."/>
            <person name="Karamata D."/>
            <person name="Kasahara Y."/>
            <person name="Klaerr-Blanchard M."/>
            <person name="Klein C."/>
            <person name="Kobayashi Y."/>
            <person name="Koetter P."/>
            <person name="Koningstein G."/>
            <person name="Krogh S."/>
            <person name="Kumano M."/>
            <person name="Kurita K."/>
            <person name="Lapidus A."/>
            <person name="Lardinois S."/>
            <person name="Lauber J."/>
            <person name="Lazarevic V."/>
            <person name="Lee S.-M."/>
            <person name="Levine A."/>
            <person name="Liu H."/>
            <person name="Masuda S."/>
            <person name="Mauel C."/>
            <person name="Medigue C."/>
            <person name="Medina N."/>
            <person name="Mellado R.P."/>
            <person name="Mizuno M."/>
            <person name="Moestl D."/>
            <person name="Nakai S."/>
            <person name="Noback M."/>
            <person name="Noone D."/>
            <person name="O'Reilly M."/>
            <person name="Ogawa K."/>
            <person name="Ogiwara A."/>
            <person name="Oudega B."/>
            <person name="Park S.-H."/>
            <person name="Parro V."/>
            <person name="Pohl T.M."/>
            <person name="Portetelle D."/>
            <person name="Porwollik S."/>
            <person name="Prescott A.M."/>
            <person name="Presecan E."/>
            <person name="Pujic P."/>
            <person name="Purnelle B."/>
            <person name="Rapoport G."/>
            <person name="Rey M."/>
            <person name="Reynolds S."/>
            <person name="Rieger M."/>
            <person name="Rivolta C."/>
            <person name="Rocha E."/>
            <person name="Roche B."/>
            <person name="Rose M."/>
            <person name="Sadaie Y."/>
            <person name="Sato T."/>
            <person name="Scanlan E."/>
            <person name="Schleich S."/>
            <person name="Schroeter R."/>
            <person name="Scoffone F."/>
            <person name="Sekiguchi J."/>
            <person name="Sekowska A."/>
            <person name="Seror S.J."/>
            <person name="Serror P."/>
            <person name="Shin B.-S."/>
            <person name="Soldo B."/>
            <person name="Sorokin A."/>
            <person name="Tacconi E."/>
            <person name="Takagi T."/>
            <person name="Takahashi H."/>
            <person name="Takemaru K."/>
            <person name="Takeuchi M."/>
            <person name="Tamakoshi A."/>
            <person name="Tanaka T."/>
            <person name="Terpstra P."/>
            <person name="Tognoni A."/>
            <person name="Tosato V."/>
            <person name="Uchiyama S."/>
            <person name="Vandenbol M."/>
            <person name="Vannier F."/>
            <person name="Vassarotti A."/>
            <person name="Viari A."/>
            <person name="Wambutt R."/>
            <person name="Wedler E."/>
            <person name="Wedler H."/>
            <person name="Weitzenegger T."/>
            <person name="Winters P."/>
            <person name="Wipat A."/>
            <person name="Yamamoto H."/>
            <person name="Yamane K."/>
            <person name="Yasumoto K."/>
            <person name="Yata K."/>
            <person name="Yoshida K."/>
            <person name="Yoshikawa H.-F."/>
            <person name="Zumstein E."/>
            <person name="Yoshikawa H."/>
            <person name="Danchin A."/>
        </authorList>
    </citation>
    <scope>NUCLEOTIDE SEQUENCE [LARGE SCALE GENOMIC DNA]</scope>
    <source>
        <strain>168</strain>
    </source>
</reference>
<organism>
    <name type="scientific">Bacillus subtilis (strain 168)</name>
    <dbReference type="NCBI Taxonomy" id="224308"/>
    <lineage>
        <taxon>Bacteria</taxon>
        <taxon>Bacillati</taxon>
        <taxon>Bacillota</taxon>
        <taxon>Bacilli</taxon>
        <taxon>Bacillales</taxon>
        <taxon>Bacillaceae</taxon>
        <taxon>Bacillus</taxon>
    </lineage>
</organism>
<feature type="chain" id="PRO_0000183474" description="Quinol oxidase subunit 1">
    <location>
        <begin position="1"/>
        <end position="649"/>
    </location>
</feature>
<feature type="topological domain" description="Extracellular" evidence="2">
    <location>
        <begin position="1"/>
        <end position="15"/>
    </location>
</feature>
<feature type="transmembrane region" description="Helical" evidence="2">
    <location>
        <begin position="16"/>
        <end position="34"/>
    </location>
</feature>
<feature type="topological domain" description="Cytoplasmic" evidence="2">
    <location>
        <begin position="35"/>
        <end position="56"/>
    </location>
</feature>
<feature type="transmembrane region" description="Helical" evidence="2">
    <location>
        <begin position="57"/>
        <end position="75"/>
    </location>
</feature>
<feature type="topological domain" description="Extracellular" evidence="2">
    <location>
        <begin position="76"/>
        <end position="97"/>
    </location>
</feature>
<feature type="transmembrane region" description="Helical" evidence="2">
    <location>
        <begin position="98"/>
        <end position="117"/>
    </location>
</feature>
<feature type="topological domain" description="Cytoplasmic" evidence="2">
    <location>
        <begin position="118"/>
        <end position="139"/>
    </location>
</feature>
<feature type="transmembrane region" description="Helical" evidence="2">
    <location>
        <begin position="140"/>
        <end position="157"/>
    </location>
</feature>
<feature type="topological domain" description="Extracellular" evidence="2">
    <location>
        <begin position="158"/>
        <end position="190"/>
    </location>
</feature>
<feature type="transmembrane region" description="Helical" evidence="2">
    <location>
        <begin position="191"/>
        <end position="209"/>
    </location>
</feature>
<feature type="topological domain" description="Cytoplasmic" evidence="2">
    <location>
        <begin position="210"/>
        <end position="227"/>
    </location>
</feature>
<feature type="transmembrane region" description="Helical" evidence="2">
    <location>
        <begin position="228"/>
        <end position="246"/>
    </location>
</feature>
<feature type="topological domain" description="Extracellular" evidence="2">
    <location>
        <begin position="247"/>
        <end position="272"/>
    </location>
</feature>
<feature type="transmembrane region" description="Helical" evidence="2">
    <location>
        <begin position="273"/>
        <end position="292"/>
    </location>
</feature>
<feature type="topological domain" description="Cytoplasmic" evidence="2">
    <location>
        <begin position="293"/>
        <end position="315"/>
    </location>
</feature>
<feature type="transmembrane region" description="Helical" evidence="2">
    <location>
        <begin position="316"/>
        <end position="335"/>
    </location>
</feature>
<feature type="topological domain" description="Extracellular" evidence="2">
    <location>
        <begin position="336"/>
        <end position="343"/>
    </location>
</feature>
<feature type="transmembrane region" description="Helical" evidence="2">
    <location>
        <begin position="344"/>
        <end position="362"/>
    </location>
</feature>
<feature type="topological domain" description="Cytoplasmic" evidence="2">
    <location>
        <begin position="363"/>
        <end position="377"/>
    </location>
</feature>
<feature type="transmembrane region" description="Helical" evidence="2">
    <location>
        <begin position="378"/>
        <end position="397"/>
    </location>
</feature>
<feature type="topological domain" description="Extracellular" evidence="2">
    <location>
        <begin position="398"/>
        <end position="405"/>
    </location>
</feature>
<feature type="transmembrane region" description="Helical" evidence="2">
    <location>
        <begin position="406"/>
        <end position="425"/>
    </location>
</feature>
<feature type="topological domain" description="Cytoplasmic" evidence="2">
    <location>
        <begin position="426"/>
        <end position="452"/>
    </location>
</feature>
<feature type="transmembrane region" description="Helical" evidence="2">
    <location>
        <begin position="453"/>
        <end position="472"/>
    </location>
</feature>
<feature type="topological domain" description="Extracellular" evidence="2">
    <location>
        <begin position="473"/>
        <end position="490"/>
    </location>
</feature>
<feature type="transmembrane region" description="Helical" evidence="2">
    <location>
        <begin position="491"/>
        <end position="510"/>
    </location>
</feature>
<feature type="topological domain" description="Cytoplasmic" evidence="2">
    <location>
        <begin position="511"/>
        <end position="584"/>
    </location>
</feature>
<feature type="transmembrane region" description="Helical" evidence="2">
    <location>
        <begin position="585"/>
        <end position="604"/>
    </location>
</feature>
<feature type="topological domain" description="Extracellular" evidence="2">
    <location>
        <begin position="605"/>
        <end position="610"/>
    </location>
</feature>
<feature type="transmembrane region" description="Helical" evidence="2">
    <location>
        <begin position="611"/>
        <end position="631"/>
    </location>
</feature>
<feature type="topological domain" description="Cytoplasmic" evidence="2">
    <location>
        <begin position="632"/>
        <end position="649"/>
    </location>
</feature>
<feature type="binding site" description="axial binding residue" evidence="1">
    <location>
        <position position="102"/>
    </location>
    <ligand>
        <name>Fe(II)-heme a</name>
        <dbReference type="ChEBI" id="CHEBI:61715"/>
    </ligand>
    <ligandPart>
        <name>Fe</name>
        <dbReference type="ChEBI" id="CHEBI:18248"/>
    </ligandPart>
</feature>
<feature type="binding site" evidence="1">
    <location>
        <position position="280"/>
    </location>
    <ligand>
        <name>Cu cation</name>
        <dbReference type="ChEBI" id="CHEBI:23378"/>
        <label>B</label>
    </ligand>
</feature>
<feature type="binding site" evidence="1">
    <location>
        <position position="284"/>
    </location>
    <ligand>
        <name>Cu cation</name>
        <dbReference type="ChEBI" id="CHEBI:23378"/>
        <label>B</label>
    </ligand>
</feature>
<feature type="binding site" evidence="1">
    <location>
        <position position="329"/>
    </location>
    <ligand>
        <name>Cu cation</name>
        <dbReference type="ChEBI" id="CHEBI:23378"/>
        <label>B</label>
    </ligand>
</feature>
<feature type="binding site" evidence="1">
    <location>
        <position position="330"/>
    </location>
    <ligand>
        <name>Cu cation</name>
        <dbReference type="ChEBI" id="CHEBI:23378"/>
        <label>B</label>
    </ligand>
</feature>
<feature type="binding site" description="axial binding residue" evidence="1">
    <location>
        <position position="415"/>
    </location>
    <ligand>
        <name>heme a3</name>
        <dbReference type="ChEBI" id="CHEBI:83282"/>
    </ligand>
    <ligandPart>
        <name>Fe</name>
        <dbReference type="ChEBI" id="CHEBI:18248"/>
    </ligandPart>
</feature>
<feature type="binding site" description="axial binding residue" evidence="1">
    <location>
        <position position="417"/>
    </location>
    <ligand>
        <name>Fe(II)-heme a</name>
        <dbReference type="ChEBI" id="CHEBI:61715"/>
    </ligand>
    <ligandPart>
        <name>Fe</name>
        <dbReference type="ChEBI" id="CHEBI:18248"/>
    </ligandPart>
</feature>
<feature type="cross-link" description="1'-histidyl-3'-tyrosine (His-Tyr)" evidence="1">
    <location>
        <begin position="280"/>
        <end position="284"/>
    </location>
</feature>
<protein>
    <recommendedName>
        <fullName>Quinol oxidase subunit 1</fullName>
        <ecNumber>1.10.3.-</ecNumber>
    </recommendedName>
    <alternativeName>
        <fullName>Oxidase aa(3)-600 subunit 1</fullName>
    </alternativeName>
    <alternativeName>
        <fullName>Quinol oxidase aa3-600, subunit QoxB</fullName>
    </alternativeName>
    <alternativeName>
        <fullName>Quinol oxidase polypeptide I</fullName>
    </alternativeName>
</protein>
<name>QOX1_BACSU</name>
<comment type="function">
    <text evidence="1">Catalyzes quinol oxidation with the concomitant reduction of oxygen to water. Major component for energy conversion during vegetative growth (By similarity).</text>
</comment>
<comment type="catalytic activity">
    <reaction>
        <text>2 a quinol + O2 = 2 a quinone + 2 H2O</text>
        <dbReference type="Rhea" id="RHEA:55376"/>
        <dbReference type="ChEBI" id="CHEBI:15377"/>
        <dbReference type="ChEBI" id="CHEBI:15379"/>
        <dbReference type="ChEBI" id="CHEBI:24646"/>
        <dbReference type="ChEBI" id="CHEBI:132124"/>
    </reaction>
</comment>
<comment type="cofactor">
    <cofactor evidence="1">
        <name>Cu cation</name>
        <dbReference type="ChEBI" id="CHEBI:23378"/>
    </cofactor>
    <text evidence="1">Binds a copper B center.</text>
</comment>
<comment type="cofactor">
    <cofactor evidence="1">
        <name>ferriheme a</name>
        <dbReference type="ChEBI" id="CHEBI:60532"/>
    </cofactor>
</comment>
<comment type="cofactor">
    <text evidence="1">Heme A3.</text>
</comment>
<comment type="pathway">
    <text>Energy metabolism; oxidative phosphorylation.</text>
</comment>
<comment type="subcellular location">
    <subcellularLocation>
        <location evidence="1">Cell membrane</location>
        <topology evidence="1">Multi-pass membrane protein</topology>
    </subcellularLocation>
</comment>
<comment type="similarity">
    <text evidence="3">Belongs to the heme-copper respiratory oxidase family.</text>
</comment>
<evidence type="ECO:0000250" key="1"/>
<evidence type="ECO:0000255" key="2"/>
<evidence type="ECO:0000305" key="3"/>
<dbReference type="EC" id="1.10.3.-"/>
<dbReference type="EMBL" id="M86548">
    <property type="protein sequence ID" value="AAA22687.1"/>
    <property type="molecule type" value="Genomic_DNA"/>
</dbReference>
<dbReference type="EMBL" id="X73124">
    <property type="protein sequence ID" value="CAA51594.1"/>
    <property type="molecule type" value="Genomic_DNA"/>
</dbReference>
<dbReference type="EMBL" id="AL009126">
    <property type="protein sequence ID" value="CAB15842.1"/>
    <property type="molecule type" value="Genomic_DNA"/>
</dbReference>
<dbReference type="PIR" id="B38129">
    <property type="entry name" value="B38129"/>
</dbReference>
<dbReference type="RefSeq" id="NP_391695.1">
    <property type="nucleotide sequence ID" value="NC_000964.3"/>
</dbReference>
<dbReference type="RefSeq" id="WP_003227407.1">
    <property type="nucleotide sequence ID" value="NZ_OZ025638.1"/>
</dbReference>
<dbReference type="PDB" id="6KOB">
    <property type="method" value="X-ray"/>
    <property type="resolution" value="3.60 A"/>
    <property type="chains" value="A/E=1-649"/>
</dbReference>
<dbReference type="PDB" id="6KOC">
    <property type="method" value="X-ray"/>
    <property type="resolution" value="3.80 A"/>
    <property type="chains" value="A/E=1-649"/>
</dbReference>
<dbReference type="PDB" id="6KOE">
    <property type="method" value="X-ray"/>
    <property type="resolution" value="3.75 A"/>
    <property type="chains" value="A/E=1-649"/>
</dbReference>
<dbReference type="PDBsum" id="6KOB"/>
<dbReference type="PDBsum" id="6KOC"/>
<dbReference type="PDBsum" id="6KOE"/>
<dbReference type="SMR" id="P34956"/>
<dbReference type="FunCoup" id="P34956">
    <property type="interactions" value="134"/>
</dbReference>
<dbReference type="STRING" id="224308.BSU38160"/>
<dbReference type="jPOST" id="P34956"/>
<dbReference type="PaxDb" id="224308-BSU38160"/>
<dbReference type="EnsemblBacteria" id="CAB15842">
    <property type="protein sequence ID" value="CAB15842"/>
    <property type="gene ID" value="BSU_38160"/>
</dbReference>
<dbReference type="GeneID" id="937303"/>
<dbReference type="KEGG" id="bsu:BSU38160"/>
<dbReference type="PATRIC" id="fig|224308.179.peg.4130"/>
<dbReference type="eggNOG" id="COG0843">
    <property type="taxonomic scope" value="Bacteria"/>
</dbReference>
<dbReference type="InParanoid" id="P34956"/>
<dbReference type="OrthoDB" id="9759913at2"/>
<dbReference type="PhylomeDB" id="P34956"/>
<dbReference type="BioCyc" id="BSUB:BSU38160-MONOMER"/>
<dbReference type="BioCyc" id="MetaCyc:BSU38160-MONOMER"/>
<dbReference type="UniPathway" id="UPA00705"/>
<dbReference type="Proteomes" id="UP000001570">
    <property type="component" value="Chromosome"/>
</dbReference>
<dbReference type="GO" id="GO:0005886">
    <property type="term" value="C:plasma membrane"/>
    <property type="evidence" value="ECO:0007669"/>
    <property type="project" value="UniProtKB-SubCell"/>
</dbReference>
<dbReference type="GO" id="GO:0005507">
    <property type="term" value="F:copper ion binding"/>
    <property type="evidence" value="ECO:0007669"/>
    <property type="project" value="InterPro"/>
</dbReference>
<dbReference type="GO" id="GO:0004129">
    <property type="term" value="F:cytochrome-c oxidase activity"/>
    <property type="evidence" value="ECO:0007669"/>
    <property type="project" value="InterPro"/>
</dbReference>
<dbReference type="GO" id="GO:0020037">
    <property type="term" value="F:heme binding"/>
    <property type="evidence" value="ECO:0007669"/>
    <property type="project" value="InterPro"/>
</dbReference>
<dbReference type="GO" id="GO:0016682">
    <property type="term" value="F:oxidoreductase activity, acting on diphenols and related substances as donors, oxygen as acceptor"/>
    <property type="evidence" value="ECO:0000250"/>
    <property type="project" value="UniProtKB"/>
</dbReference>
<dbReference type="GO" id="GO:0009060">
    <property type="term" value="P:aerobic respiration"/>
    <property type="evidence" value="ECO:0000318"/>
    <property type="project" value="GO_Central"/>
</dbReference>
<dbReference type="GO" id="GO:0042773">
    <property type="term" value="P:ATP synthesis coupled electron transport"/>
    <property type="evidence" value="ECO:0000250"/>
    <property type="project" value="UniProtKB"/>
</dbReference>
<dbReference type="GO" id="GO:0015990">
    <property type="term" value="P:electron transport coupled proton transport"/>
    <property type="evidence" value="ECO:0000318"/>
    <property type="project" value="GO_Central"/>
</dbReference>
<dbReference type="GO" id="GO:0022904">
    <property type="term" value="P:respiratory electron transport chain"/>
    <property type="evidence" value="ECO:0000318"/>
    <property type="project" value="GO_Central"/>
</dbReference>
<dbReference type="CDD" id="cd01662">
    <property type="entry name" value="Ubiquinol_Oxidase_I"/>
    <property type="match status" value="1"/>
</dbReference>
<dbReference type="FunFam" id="1.20.210.10:FF:000002">
    <property type="entry name" value="Cytochrome o ubiquinol oxidase, subunit I"/>
    <property type="match status" value="1"/>
</dbReference>
<dbReference type="Gene3D" id="1.10.287.70">
    <property type="match status" value="1"/>
</dbReference>
<dbReference type="Gene3D" id="1.20.210.10">
    <property type="entry name" value="Cytochrome c oxidase-like, subunit I domain"/>
    <property type="match status" value="1"/>
</dbReference>
<dbReference type="InterPro" id="IPR023616">
    <property type="entry name" value="Cyt_c_oxase-like_su1_dom"/>
</dbReference>
<dbReference type="InterPro" id="IPR036927">
    <property type="entry name" value="Cyt_c_oxase-like_su1_sf"/>
</dbReference>
<dbReference type="InterPro" id="IPR000883">
    <property type="entry name" value="Cyt_C_Oxase_1"/>
</dbReference>
<dbReference type="InterPro" id="IPR023615">
    <property type="entry name" value="Cyt_c_Oxase_su1_BS"/>
</dbReference>
<dbReference type="InterPro" id="IPR014233">
    <property type="entry name" value="QoxB"/>
</dbReference>
<dbReference type="NCBIfam" id="TIGR02882">
    <property type="entry name" value="QoxB"/>
    <property type="match status" value="1"/>
</dbReference>
<dbReference type="PANTHER" id="PTHR10422:SF35">
    <property type="entry name" value="CYTOCHROME BO(3) UBIQUINOL OXIDASE SUBUNIT 1"/>
    <property type="match status" value="1"/>
</dbReference>
<dbReference type="PANTHER" id="PTHR10422">
    <property type="entry name" value="CYTOCHROME C OXIDASE SUBUNIT 1"/>
    <property type="match status" value="1"/>
</dbReference>
<dbReference type="Pfam" id="PF00115">
    <property type="entry name" value="COX1"/>
    <property type="match status" value="1"/>
</dbReference>
<dbReference type="PRINTS" id="PR01165">
    <property type="entry name" value="CYCOXIDASEI"/>
</dbReference>
<dbReference type="SUPFAM" id="SSF81442">
    <property type="entry name" value="Cytochrome c oxidase subunit I-like"/>
    <property type="match status" value="1"/>
</dbReference>
<dbReference type="PROSITE" id="PS50855">
    <property type="entry name" value="COX1"/>
    <property type="match status" value="1"/>
</dbReference>
<dbReference type="PROSITE" id="PS00077">
    <property type="entry name" value="COX1_CUB"/>
    <property type="match status" value="1"/>
</dbReference>
<keyword id="KW-0002">3D-structure</keyword>
<keyword id="KW-1003">Cell membrane</keyword>
<keyword id="KW-0186">Copper</keyword>
<keyword id="KW-0249">Electron transport</keyword>
<keyword id="KW-0349">Heme</keyword>
<keyword id="KW-0375">Hydrogen ion transport</keyword>
<keyword id="KW-0406">Ion transport</keyword>
<keyword id="KW-0408">Iron</keyword>
<keyword id="KW-0472">Membrane</keyword>
<keyword id="KW-0479">Metal-binding</keyword>
<keyword id="KW-0560">Oxidoreductase</keyword>
<keyword id="KW-1185">Reference proteome</keyword>
<keyword id="KW-0679">Respiratory chain</keyword>
<keyword id="KW-0812">Transmembrane</keyword>
<keyword id="KW-1133">Transmembrane helix</keyword>
<keyword id="KW-0813">Transport</keyword>
<sequence length="649" mass="73838">MKFKWDEFFVTGDPLILGAQVSIALSTIAIIFVLTYFKKWKWLWSEWITTVDHKKLGIMYIISAVIMLFRGGVDGLMMRAQLALPNNSFLDSNHYNEIFTTHGTIMIIFMAMPFLIGLINVVVPLQIGARDVAFPYLNNLSFWTFFVGAMLFNISFVIGGSPNAGWTSYMPLASNDMSPGPGENYYLLGLQIAGIGTLMTGINFMVTILKMRTKGMTLMRMPMFTWTTLITMVIIVFAFPVLTVALALLSFDRLFGAHFFTLEAGGMPMLWANLFWIWGHPEVYIVILPAFGIFSEIISSFARKQLFGYKAMVGSIIAISVLSFLVWTHHFFTMGNSASVNSFFSITTMAISIPTGVKIFNWLFTMYKGRISFTTPMLWALAFIPNFVIGGVTGVMLAMAAADYQYHNTYFLVSHFHYVLIAGTVFACFAGFIFWYPKMFGHKLNERIGKWFFWIFMIGFNICFFPQYFLGLQGMPRRIYTYGPNDGWTTLNFISTVGAFMMGVGFLILCYNIYYSFRYSTREISGDSWGVGRTLDWATSSAIPPHYNFAVLPEVKSQDAFLHMKEEKTELYPESKFKKIHMPSNSGRPFFMSVAFGLAGFGLVFEWYWMGVVGLIGVLLCMVLRSFEYDNGYYISVDEIKETERKISE</sequence>
<proteinExistence type="evidence at protein level"/>
<accession>P34956</accession>
<gene>
    <name type="primary">qoxB</name>
    <name type="ordered locus">BSU38160</name>
    <name type="ORF">ipa-38d</name>
</gene>